<evidence type="ECO:0000250" key="1"/>
<evidence type="ECO:0000255" key="2"/>
<evidence type="ECO:0000255" key="3">
    <source>
        <dbReference type="PROSITE-ProRule" id="PRU00205"/>
    </source>
</evidence>
<evidence type="ECO:0000256" key="4">
    <source>
        <dbReference type="SAM" id="MobiDB-lite"/>
    </source>
</evidence>
<evidence type="ECO:0000305" key="5"/>
<organism>
    <name type="scientific">Mus musculus</name>
    <name type="common">Mouse</name>
    <dbReference type="NCBI Taxonomy" id="10090"/>
    <lineage>
        <taxon>Eukaryota</taxon>
        <taxon>Metazoa</taxon>
        <taxon>Chordata</taxon>
        <taxon>Craniata</taxon>
        <taxon>Vertebrata</taxon>
        <taxon>Euteleostomi</taxon>
        <taxon>Mammalia</taxon>
        <taxon>Eutheria</taxon>
        <taxon>Euarchontoglires</taxon>
        <taxon>Glires</taxon>
        <taxon>Rodentia</taxon>
        <taxon>Myomorpha</taxon>
        <taxon>Muroidea</taxon>
        <taxon>Muridae</taxon>
        <taxon>Murinae</taxon>
        <taxon>Mus</taxon>
        <taxon>Mus</taxon>
    </lineage>
</organism>
<dbReference type="EMBL" id="AK044115">
    <property type="protein sequence ID" value="BAC31785.1"/>
    <property type="molecule type" value="mRNA"/>
</dbReference>
<dbReference type="EMBL" id="AK052946">
    <property type="protein sequence ID" value="BAC35215.2"/>
    <property type="molecule type" value="mRNA"/>
</dbReference>
<dbReference type="EMBL" id="AK083053">
    <property type="protein sequence ID" value="BAC38746.1"/>
    <property type="molecule type" value="mRNA"/>
</dbReference>
<dbReference type="EMBL" id="BC024829">
    <property type="protein sequence ID" value="AAH24829.1"/>
    <property type="molecule type" value="mRNA"/>
</dbReference>
<dbReference type="EMBL" id="BC027120">
    <property type="protein sequence ID" value="AAH27120.1"/>
    <property type="molecule type" value="mRNA"/>
</dbReference>
<dbReference type="CCDS" id="CCDS17819.1"/>
<dbReference type="RefSeq" id="NP_666252.1">
    <property type="nucleotide sequence ID" value="NM_146140.4"/>
</dbReference>
<dbReference type="SMR" id="Q8QZR0"/>
<dbReference type="FunCoup" id="Q8QZR0">
    <property type="interactions" value="194"/>
</dbReference>
<dbReference type="STRING" id="10090.ENSMUSP00000062635"/>
<dbReference type="iPTMnet" id="Q8QZR0"/>
<dbReference type="PhosphoSitePlus" id="Q8QZR0"/>
<dbReference type="PaxDb" id="10090-ENSMUSP00000062635"/>
<dbReference type="PeptideAtlas" id="Q8QZR0"/>
<dbReference type="ProteomicsDB" id="258837"/>
<dbReference type="Antibodypedia" id="26589">
    <property type="antibodies" value="80 antibodies from 16 providers"/>
</dbReference>
<dbReference type="DNASU" id="229801"/>
<dbReference type="Ensembl" id="ENSMUST00000058994.6">
    <property type="protein sequence ID" value="ENSMUSP00000062635.5"/>
    <property type="gene ID" value="ENSMUSG00000044528.6"/>
</dbReference>
<dbReference type="GeneID" id="229801"/>
<dbReference type="KEGG" id="mmu:229801"/>
<dbReference type="UCSC" id="uc008rfr.1">
    <property type="organism name" value="mouse"/>
</dbReference>
<dbReference type="AGR" id="MGI:2443503"/>
<dbReference type="CTD" id="133022"/>
<dbReference type="MGI" id="MGI:2443503">
    <property type="gene designation" value="Tram1l1"/>
</dbReference>
<dbReference type="VEuPathDB" id="HostDB:ENSMUSG00000044528"/>
<dbReference type="eggNOG" id="KOG1608">
    <property type="taxonomic scope" value="Eukaryota"/>
</dbReference>
<dbReference type="GeneTree" id="ENSGT00510000046470"/>
<dbReference type="HOGENOM" id="CLU_062830_0_0_1"/>
<dbReference type="InParanoid" id="Q8QZR0"/>
<dbReference type="OMA" id="HGFPELY"/>
<dbReference type="OrthoDB" id="3053196at2759"/>
<dbReference type="PhylomeDB" id="Q8QZR0"/>
<dbReference type="TreeFam" id="TF314319"/>
<dbReference type="BioGRID-ORCS" id="229801">
    <property type="hits" value="1 hit in 61 CRISPR screens"/>
</dbReference>
<dbReference type="PRO" id="PR:Q8QZR0"/>
<dbReference type="Proteomes" id="UP000000589">
    <property type="component" value="Chromosome 3"/>
</dbReference>
<dbReference type="RNAct" id="Q8QZR0">
    <property type="molecule type" value="protein"/>
</dbReference>
<dbReference type="Bgee" id="ENSMUSG00000044528">
    <property type="expression patterns" value="Expressed in dorsal pancreas and 168 other cell types or tissues"/>
</dbReference>
<dbReference type="GO" id="GO:0005789">
    <property type="term" value="C:endoplasmic reticulum membrane"/>
    <property type="evidence" value="ECO:0007669"/>
    <property type="project" value="UniProtKB-SubCell"/>
</dbReference>
<dbReference type="GO" id="GO:0006616">
    <property type="term" value="P:SRP-dependent cotranslational protein targeting to membrane, translocation"/>
    <property type="evidence" value="ECO:0007669"/>
    <property type="project" value="InterPro"/>
</dbReference>
<dbReference type="InterPro" id="IPR006634">
    <property type="entry name" value="TLC-dom"/>
</dbReference>
<dbReference type="InterPro" id="IPR016447">
    <property type="entry name" value="Translocation_assoc_membrane"/>
</dbReference>
<dbReference type="PANTHER" id="PTHR12371:SF9">
    <property type="entry name" value="TRANSLOCATING CHAIN-ASSOCIATED MEMBRANE PROTEIN 1-LIKE 1"/>
    <property type="match status" value="1"/>
</dbReference>
<dbReference type="PANTHER" id="PTHR12371">
    <property type="entry name" value="TRANSLOCATION ASSOCIATED MEMBRANE PROTEIN"/>
    <property type="match status" value="1"/>
</dbReference>
<dbReference type="Pfam" id="PF03798">
    <property type="entry name" value="TRAM_LAG1_CLN8"/>
    <property type="match status" value="1"/>
</dbReference>
<dbReference type="PIRSF" id="PIRSF005449">
    <property type="entry name" value="Translocation_assoc_membrane"/>
    <property type="match status" value="1"/>
</dbReference>
<dbReference type="SMART" id="SM00724">
    <property type="entry name" value="TLC"/>
    <property type="match status" value="1"/>
</dbReference>
<dbReference type="PROSITE" id="PS50922">
    <property type="entry name" value="TLC"/>
    <property type="match status" value="1"/>
</dbReference>
<name>TR1L1_MOUSE</name>
<gene>
    <name type="primary">Tram1l1</name>
</gene>
<comment type="function">
    <text evidence="1">Stimulatory or required for the translocation of secretory proteins across the ER membrane.</text>
</comment>
<comment type="subcellular location">
    <subcellularLocation>
        <location evidence="1">Endoplasmic reticulum membrane</location>
        <topology evidence="1">Multi-pass membrane protein</topology>
    </subcellularLocation>
</comment>
<comment type="similarity">
    <text evidence="5">Belongs to the TRAM family.</text>
</comment>
<sequence>MGLRKKNARNPPVLSHEFMVQNHADMVSCVGMFFVLGLMFEGTSEMSIAFLTLQHGVVVPAEGLPSGSRTLYHYGVKDLATVFFYMLVAIIIHATIQEYVLDKLSRRLQLTKGKQNKLNEAGQLSVFYIVSGIWGMIILASENCLSDPTLLWKSQPHNMMTFQMKFFYISQLAYWFHSFPELYFQKVRKQDIPGQLIYIGLHLFHIGGAYLLYLNHLGLLLLMLHYAVELLSSVCSLLYFGDERYQKGLSLWPIVFISGRLVTLIVSVVTVGLHLAGTNRNGNALSGNVNVLAAKIAVLSSSCSIQVYITWTLTTVWLQRWLEDANLHVCGRKRRSRARKGTENGVENPNRIDSPPKKKEKAP</sequence>
<accession>Q8QZR0</accession>
<accession>Q8C455</accession>
<accession>Q8C6X6</accession>
<keyword id="KW-0256">Endoplasmic reticulum</keyword>
<keyword id="KW-0472">Membrane</keyword>
<keyword id="KW-0653">Protein transport</keyword>
<keyword id="KW-1185">Reference proteome</keyword>
<keyword id="KW-0811">Translocation</keyword>
<keyword id="KW-0812">Transmembrane</keyword>
<keyword id="KW-1133">Transmembrane helix</keyword>
<keyword id="KW-0813">Transport</keyword>
<protein>
    <recommendedName>
        <fullName>Translocating chain-associated membrane protein 1-like 1</fullName>
    </recommendedName>
</protein>
<feature type="chain" id="PRO_0000313707" description="Translocating chain-associated membrane protein 1-like 1">
    <location>
        <begin position="1"/>
        <end position="363"/>
    </location>
</feature>
<feature type="topological domain" description="Cytoplasmic" evidence="2">
    <location>
        <begin position="1"/>
        <end position="29"/>
    </location>
</feature>
<feature type="transmembrane region" description="Helical" evidence="2">
    <location>
        <begin position="30"/>
        <end position="50"/>
    </location>
</feature>
<feature type="topological domain" description="Lumenal" evidence="2">
    <location>
        <begin position="51"/>
        <end position="80"/>
    </location>
</feature>
<feature type="transmembrane region" description="Helical" evidence="2">
    <location>
        <begin position="81"/>
        <end position="101"/>
    </location>
</feature>
<feature type="topological domain" description="Cytoplasmic" evidence="2">
    <location>
        <begin position="102"/>
        <end position="120"/>
    </location>
</feature>
<feature type="transmembrane region" description="Helical" evidence="2">
    <location>
        <begin position="121"/>
        <end position="141"/>
    </location>
</feature>
<feature type="topological domain" description="Lumenal" evidence="2">
    <location>
        <begin position="142"/>
        <end position="159"/>
    </location>
</feature>
<feature type="transmembrane region" description="Helical" evidence="2">
    <location>
        <begin position="160"/>
        <end position="179"/>
    </location>
</feature>
<feature type="topological domain" description="Cytoplasmic" evidence="2">
    <location>
        <begin position="180"/>
        <end position="191"/>
    </location>
</feature>
<feature type="transmembrane region" description="Helical" evidence="2">
    <location>
        <begin position="192"/>
        <end position="214"/>
    </location>
</feature>
<feature type="topological domain" description="Lumenal" evidence="2">
    <location>
        <begin position="215"/>
        <end position="218"/>
    </location>
</feature>
<feature type="transmembrane region" description="Helical" evidence="2">
    <location>
        <begin position="219"/>
        <end position="241"/>
    </location>
</feature>
<feature type="topological domain" description="Cytoplasmic" evidence="2">
    <location>
        <begin position="242"/>
        <end position="250"/>
    </location>
</feature>
<feature type="transmembrane region" description="Helical" evidence="2">
    <location>
        <begin position="251"/>
        <end position="271"/>
    </location>
</feature>
<feature type="topological domain" description="Lumenal" evidence="2">
    <location>
        <begin position="272"/>
        <end position="295"/>
    </location>
</feature>
<feature type="transmembrane region" description="Helical" evidence="2">
    <location>
        <begin position="296"/>
        <end position="316"/>
    </location>
</feature>
<feature type="topological domain" description="Cytoplasmic" evidence="2">
    <location>
        <begin position="317"/>
        <end position="363"/>
    </location>
</feature>
<feature type="domain" description="TLC" evidence="3">
    <location>
        <begin position="116"/>
        <end position="324"/>
    </location>
</feature>
<feature type="region of interest" description="Disordered" evidence="4">
    <location>
        <begin position="338"/>
        <end position="363"/>
    </location>
</feature>
<feature type="compositionally biased region" description="Basic and acidic residues" evidence="4">
    <location>
        <begin position="354"/>
        <end position="363"/>
    </location>
</feature>
<feature type="sequence conflict" description="In Ref. 1; BAC38746." evidence="5" ref="1">
    <original>M</original>
    <variation>L</variation>
    <location>
        <position position="39"/>
    </location>
</feature>
<proteinExistence type="evidence at transcript level"/>
<reference key="1">
    <citation type="journal article" date="2005" name="Science">
        <title>The transcriptional landscape of the mammalian genome.</title>
        <authorList>
            <person name="Carninci P."/>
            <person name="Kasukawa T."/>
            <person name="Katayama S."/>
            <person name="Gough J."/>
            <person name="Frith M.C."/>
            <person name="Maeda N."/>
            <person name="Oyama R."/>
            <person name="Ravasi T."/>
            <person name="Lenhard B."/>
            <person name="Wells C."/>
            <person name="Kodzius R."/>
            <person name="Shimokawa K."/>
            <person name="Bajic V.B."/>
            <person name="Brenner S.E."/>
            <person name="Batalov S."/>
            <person name="Forrest A.R."/>
            <person name="Zavolan M."/>
            <person name="Davis M.J."/>
            <person name="Wilming L.G."/>
            <person name="Aidinis V."/>
            <person name="Allen J.E."/>
            <person name="Ambesi-Impiombato A."/>
            <person name="Apweiler R."/>
            <person name="Aturaliya R.N."/>
            <person name="Bailey T.L."/>
            <person name="Bansal M."/>
            <person name="Baxter L."/>
            <person name="Beisel K.W."/>
            <person name="Bersano T."/>
            <person name="Bono H."/>
            <person name="Chalk A.M."/>
            <person name="Chiu K.P."/>
            <person name="Choudhary V."/>
            <person name="Christoffels A."/>
            <person name="Clutterbuck D.R."/>
            <person name="Crowe M.L."/>
            <person name="Dalla E."/>
            <person name="Dalrymple B.P."/>
            <person name="de Bono B."/>
            <person name="Della Gatta G."/>
            <person name="di Bernardo D."/>
            <person name="Down T."/>
            <person name="Engstrom P."/>
            <person name="Fagiolini M."/>
            <person name="Faulkner G."/>
            <person name="Fletcher C.F."/>
            <person name="Fukushima T."/>
            <person name="Furuno M."/>
            <person name="Futaki S."/>
            <person name="Gariboldi M."/>
            <person name="Georgii-Hemming P."/>
            <person name="Gingeras T.R."/>
            <person name="Gojobori T."/>
            <person name="Green R.E."/>
            <person name="Gustincich S."/>
            <person name="Harbers M."/>
            <person name="Hayashi Y."/>
            <person name="Hensch T.K."/>
            <person name="Hirokawa N."/>
            <person name="Hill D."/>
            <person name="Huminiecki L."/>
            <person name="Iacono M."/>
            <person name="Ikeo K."/>
            <person name="Iwama A."/>
            <person name="Ishikawa T."/>
            <person name="Jakt M."/>
            <person name="Kanapin A."/>
            <person name="Katoh M."/>
            <person name="Kawasawa Y."/>
            <person name="Kelso J."/>
            <person name="Kitamura H."/>
            <person name="Kitano H."/>
            <person name="Kollias G."/>
            <person name="Krishnan S.P."/>
            <person name="Kruger A."/>
            <person name="Kummerfeld S.K."/>
            <person name="Kurochkin I.V."/>
            <person name="Lareau L.F."/>
            <person name="Lazarevic D."/>
            <person name="Lipovich L."/>
            <person name="Liu J."/>
            <person name="Liuni S."/>
            <person name="McWilliam S."/>
            <person name="Madan Babu M."/>
            <person name="Madera M."/>
            <person name="Marchionni L."/>
            <person name="Matsuda H."/>
            <person name="Matsuzawa S."/>
            <person name="Miki H."/>
            <person name="Mignone F."/>
            <person name="Miyake S."/>
            <person name="Morris K."/>
            <person name="Mottagui-Tabar S."/>
            <person name="Mulder N."/>
            <person name="Nakano N."/>
            <person name="Nakauchi H."/>
            <person name="Ng P."/>
            <person name="Nilsson R."/>
            <person name="Nishiguchi S."/>
            <person name="Nishikawa S."/>
            <person name="Nori F."/>
            <person name="Ohara O."/>
            <person name="Okazaki Y."/>
            <person name="Orlando V."/>
            <person name="Pang K.C."/>
            <person name="Pavan W.J."/>
            <person name="Pavesi G."/>
            <person name="Pesole G."/>
            <person name="Petrovsky N."/>
            <person name="Piazza S."/>
            <person name="Reed J."/>
            <person name="Reid J.F."/>
            <person name="Ring B.Z."/>
            <person name="Ringwald M."/>
            <person name="Rost B."/>
            <person name="Ruan Y."/>
            <person name="Salzberg S.L."/>
            <person name="Sandelin A."/>
            <person name="Schneider C."/>
            <person name="Schoenbach C."/>
            <person name="Sekiguchi K."/>
            <person name="Semple C.A."/>
            <person name="Seno S."/>
            <person name="Sessa L."/>
            <person name="Sheng Y."/>
            <person name="Shibata Y."/>
            <person name="Shimada H."/>
            <person name="Shimada K."/>
            <person name="Silva D."/>
            <person name="Sinclair B."/>
            <person name="Sperling S."/>
            <person name="Stupka E."/>
            <person name="Sugiura K."/>
            <person name="Sultana R."/>
            <person name="Takenaka Y."/>
            <person name="Taki K."/>
            <person name="Tammoja K."/>
            <person name="Tan S.L."/>
            <person name="Tang S."/>
            <person name="Taylor M.S."/>
            <person name="Tegner J."/>
            <person name="Teichmann S.A."/>
            <person name="Ueda H.R."/>
            <person name="van Nimwegen E."/>
            <person name="Verardo R."/>
            <person name="Wei C.L."/>
            <person name="Yagi K."/>
            <person name="Yamanishi H."/>
            <person name="Zabarovsky E."/>
            <person name="Zhu S."/>
            <person name="Zimmer A."/>
            <person name="Hide W."/>
            <person name="Bult C."/>
            <person name="Grimmond S.M."/>
            <person name="Teasdale R.D."/>
            <person name="Liu E.T."/>
            <person name="Brusic V."/>
            <person name="Quackenbush J."/>
            <person name="Wahlestedt C."/>
            <person name="Mattick J.S."/>
            <person name="Hume D.A."/>
            <person name="Kai C."/>
            <person name="Sasaki D."/>
            <person name="Tomaru Y."/>
            <person name="Fukuda S."/>
            <person name="Kanamori-Katayama M."/>
            <person name="Suzuki M."/>
            <person name="Aoki J."/>
            <person name="Arakawa T."/>
            <person name="Iida J."/>
            <person name="Imamura K."/>
            <person name="Itoh M."/>
            <person name="Kato T."/>
            <person name="Kawaji H."/>
            <person name="Kawagashira N."/>
            <person name="Kawashima T."/>
            <person name="Kojima M."/>
            <person name="Kondo S."/>
            <person name="Konno H."/>
            <person name="Nakano K."/>
            <person name="Ninomiya N."/>
            <person name="Nishio T."/>
            <person name="Okada M."/>
            <person name="Plessy C."/>
            <person name="Shibata K."/>
            <person name="Shiraki T."/>
            <person name="Suzuki S."/>
            <person name="Tagami M."/>
            <person name="Waki K."/>
            <person name="Watahiki A."/>
            <person name="Okamura-Oho Y."/>
            <person name="Suzuki H."/>
            <person name="Kawai J."/>
            <person name="Hayashizaki Y."/>
        </authorList>
    </citation>
    <scope>NUCLEOTIDE SEQUENCE [LARGE SCALE MRNA]</scope>
    <source>
        <strain>C57BL/6J</strain>
        <tissue>Brain cortex</tissue>
        <tissue>Head</tissue>
        <tissue>Spinal cord</tissue>
    </source>
</reference>
<reference key="2">
    <citation type="journal article" date="2004" name="Genome Res.">
        <title>The status, quality, and expansion of the NIH full-length cDNA project: the Mammalian Gene Collection (MGC).</title>
        <authorList>
            <consortium name="The MGC Project Team"/>
        </authorList>
    </citation>
    <scope>NUCLEOTIDE SEQUENCE [LARGE SCALE MRNA]</scope>
    <source>
        <tissue>Eye</tissue>
    </source>
</reference>